<protein>
    <recommendedName>
        <fullName evidence="1">Ribosomal RNA large subunit methyltransferase E</fullName>
        <ecNumber evidence="1">2.1.1.166</ecNumber>
    </recommendedName>
    <alternativeName>
        <fullName evidence="1">23S rRNA Um2552 methyltransferase</fullName>
    </alternativeName>
    <alternativeName>
        <fullName evidence="1">rRNA (uridine-2'-O-)-methyltransferase</fullName>
    </alternativeName>
</protein>
<organism>
    <name type="scientific">Xanthomonas campestris pv. campestris (strain 8004)</name>
    <dbReference type="NCBI Taxonomy" id="314565"/>
    <lineage>
        <taxon>Bacteria</taxon>
        <taxon>Pseudomonadati</taxon>
        <taxon>Pseudomonadota</taxon>
        <taxon>Gammaproteobacteria</taxon>
        <taxon>Lysobacterales</taxon>
        <taxon>Lysobacteraceae</taxon>
        <taxon>Xanthomonas</taxon>
    </lineage>
</organism>
<proteinExistence type="inferred from homology"/>
<gene>
    <name evidence="1" type="primary">rlmE</name>
    <name evidence="1" type="synonym">ftsJ</name>
    <name evidence="1" type="synonym">rrmJ</name>
    <name type="ordered locus">XC_2519</name>
</gene>
<feature type="chain" id="PRO_0000155556" description="Ribosomal RNA large subunit methyltransferase E">
    <location>
        <begin position="1"/>
        <end position="210"/>
    </location>
</feature>
<feature type="active site" description="Proton acceptor" evidence="1">
    <location>
        <position position="162"/>
    </location>
</feature>
<feature type="binding site" evidence="1">
    <location>
        <position position="61"/>
    </location>
    <ligand>
        <name>S-adenosyl-L-methionine</name>
        <dbReference type="ChEBI" id="CHEBI:59789"/>
    </ligand>
</feature>
<feature type="binding site" evidence="1">
    <location>
        <position position="63"/>
    </location>
    <ligand>
        <name>S-adenosyl-L-methionine</name>
        <dbReference type="ChEBI" id="CHEBI:59789"/>
    </ligand>
</feature>
<feature type="binding site" evidence="1">
    <location>
        <position position="81"/>
    </location>
    <ligand>
        <name>S-adenosyl-L-methionine</name>
        <dbReference type="ChEBI" id="CHEBI:59789"/>
    </ligand>
</feature>
<feature type="binding site" evidence="1">
    <location>
        <position position="97"/>
    </location>
    <ligand>
        <name>S-adenosyl-L-methionine</name>
        <dbReference type="ChEBI" id="CHEBI:59789"/>
    </ligand>
</feature>
<feature type="binding site" evidence="1">
    <location>
        <position position="122"/>
    </location>
    <ligand>
        <name>S-adenosyl-L-methionine</name>
        <dbReference type="ChEBI" id="CHEBI:59789"/>
    </ligand>
</feature>
<keyword id="KW-0963">Cytoplasm</keyword>
<keyword id="KW-0489">Methyltransferase</keyword>
<keyword id="KW-0698">rRNA processing</keyword>
<keyword id="KW-0949">S-adenosyl-L-methionine</keyword>
<keyword id="KW-0808">Transferase</keyword>
<sequence>MPSRSKSSQRWLKEHFADPFVKKAQAEGMRSRAAYKLEELLQRDRLLKPGMVVVDLGAAPGGWSQQVRKSMGASGRVVALDILEMPPLAGVEFLHGDFREQAVLSEFEAMLGDVPVDLVLSDMAPNKSGMDAVDQPRMMHLAELAMEFADTHLKVGGAFLIKLFQGVGSDDYIRELRRRYEKVTIRKPAASRKRSAEVYVLGQGKRAQIK</sequence>
<dbReference type="EC" id="2.1.1.166" evidence="1"/>
<dbReference type="EMBL" id="CP000050">
    <property type="protein sequence ID" value="AAY49569.1"/>
    <property type="status" value="ALT_INIT"/>
    <property type="molecule type" value="Genomic_DNA"/>
</dbReference>
<dbReference type="RefSeq" id="WP_012438562.1">
    <property type="nucleotide sequence ID" value="NZ_CP155948.1"/>
</dbReference>
<dbReference type="SMR" id="Q4UTQ4"/>
<dbReference type="GeneID" id="58013734"/>
<dbReference type="KEGG" id="xcb:XC_2519"/>
<dbReference type="HOGENOM" id="CLU_009422_4_0_6"/>
<dbReference type="Proteomes" id="UP000000420">
    <property type="component" value="Chromosome"/>
</dbReference>
<dbReference type="GO" id="GO:0005737">
    <property type="term" value="C:cytoplasm"/>
    <property type="evidence" value="ECO:0007669"/>
    <property type="project" value="UniProtKB-SubCell"/>
</dbReference>
<dbReference type="GO" id="GO:0008650">
    <property type="term" value="F:rRNA (uridine-2'-O-)-methyltransferase activity"/>
    <property type="evidence" value="ECO:0007669"/>
    <property type="project" value="UniProtKB-UniRule"/>
</dbReference>
<dbReference type="FunFam" id="3.40.50.150:FF:000005">
    <property type="entry name" value="Ribosomal RNA large subunit methyltransferase E"/>
    <property type="match status" value="1"/>
</dbReference>
<dbReference type="Gene3D" id="3.40.50.150">
    <property type="entry name" value="Vaccinia Virus protein VP39"/>
    <property type="match status" value="1"/>
</dbReference>
<dbReference type="HAMAP" id="MF_01547">
    <property type="entry name" value="RNA_methyltr_E"/>
    <property type="match status" value="1"/>
</dbReference>
<dbReference type="InterPro" id="IPR050082">
    <property type="entry name" value="RNA_methyltr_RlmE"/>
</dbReference>
<dbReference type="InterPro" id="IPR002877">
    <property type="entry name" value="RNA_MeTrfase_FtsJ_dom"/>
</dbReference>
<dbReference type="InterPro" id="IPR015507">
    <property type="entry name" value="rRNA-MeTfrase_E"/>
</dbReference>
<dbReference type="InterPro" id="IPR029063">
    <property type="entry name" value="SAM-dependent_MTases_sf"/>
</dbReference>
<dbReference type="NCBIfam" id="NF008390">
    <property type="entry name" value="PRK11188.1"/>
    <property type="match status" value="1"/>
</dbReference>
<dbReference type="PANTHER" id="PTHR10920">
    <property type="entry name" value="RIBOSOMAL RNA METHYLTRANSFERASE"/>
    <property type="match status" value="1"/>
</dbReference>
<dbReference type="PANTHER" id="PTHR10920:SF18">
    <property type="entry name" value="RRNA METHYLTRANSFERASE 2, MITOCHONDRIAL"/>
    <property type="match status" value="1"/>
</dbReference>
<dbReference type="Pfam" id="PF01728">
    <property type="entry name" value="FtsJ"/>
    <property type="match status" value="1"/>
</dbReference>
<dbReference type="PIRSF" id="PIRSF005461">
    <property type="entry name" value="23S_rRNA_mtase"/>
    <property type="match status" value="1"/>
</dbReference>
<dbReference type="SUPFAM" id="SSF53335">
    <property type="entry name" value="S-adenosyl-L-methionine-dependent methyltransferases"/>
    <property type="match status" value="1"/>
</dbReference>
<reference key="1">
    <citation type="journal article" date="2005" name="Genome Res.">
        <title>Comparative and functional genomic analyses of the pathogenicity of phytopathogen Xanthomonas campestris pv. campestris.</title>
        <authorList>
            <person name="Qian W."/>
            <person name="Jia Y."/>
            <person name="Ren S.-X."/>
            <person name="He Y.-Q."/>
            <person name="Feng J.-X."/>
            <person name="Lu L.-F."/>
            <person name="Sun Q."/>
            <person name="Ying G."/>
            <person name="Tang D.-J."/>
            <person name="Tang H."/>
            <person name="Wu W."/>
            <person name="Hao P."/>
            <person name="Wang L."/>
            <person name="Jiang B.-L."/>
            <person name="Zeng S."/>
            <person name="Gu W.-Y."/>
            <person name="Lu G."/>
            <person name="Rong L."/>
            <person name="Tian Y."/>
            <person name="Yao Z."/>
            <person name="Fu G."/>
            <person name="Chen B."/>
            <person name="Fang R."/>
            <person name="Qiang B."/>
            <person name="Chen Z."/>
            <person name="Zhao G.-P."/>
            <person name="Tang J.-L."/>
            <person name="He C."/>
        </authorList>
    </citation>
    <scope>NUCLEOTIDE SEQUENCE [LARGE SCALE GENOMIC DNA]</scope>
    <source>
        <strain>8004</strain>
    </source>
</reference>
<evidence type="ECO:0000255" key="1">
    <source>
        <dbReference type="HAMAP-Rule" id="MF_01547"/>
    </source>
</evidence>
<evidence type="ECO:0000305" key="2"/>
<comment type="function">
    <text evidence="1">Specifically methylates the uridine in position 2552 of 23S rRNA at the 2'-O position of the ribose in the fully assembled 50S ribosomal subunit.</text>
</comment>
<comment type="catalytic activity">
    <reaction evidence="1">
        <text>uridine(2552) in 23S rRNA + S-adenosyl-L-methionine = 2'-O-methyluridine(2552) in 23S rRNA + S-adenosyl-L-homocysteine + H(+)</text>
        <dbReference type="Rhea" id="RHEA:42720"/>
        <dbReference type="Rhea" id="RHEA-COMP:10202"/>
        <dbReference type="Rhea" id="RHEA-COMP:10203"/>
        <dbReference type="ChEBI" id="CHEBI:15378"/>
        <dbReference type="ChEBI" id="CHEBI:57856"/>
        <dbReference type="ChEBI" id="CHEBI:59789"/>
        <dbReference type="ChEBI" id="CHEBI:65315"/>
        <dbReference type="ChEBI" id="CHEBI:74478"/>
        <dbReference type="EC" id="2.1.1.166"/>
    </reaction>
</comment>
<comment type="subcellular location">
    <subcellularLocation>
        <location evidence="1">Cytoplasm</location>
    </subcellularLocation>
</comment>
<comment type="similarity">
    <text evidence="1">Belongs to the class I-like SAM-binding methyltransferase superfamily. RNA methyltransferase RlmE family.</text>
</comment>
<comment type="sequence caution" evidence="2">
    <conflict type="erroneous initiation">
        <sequence resource="EMBL-CDS" id="AAY49569"/>
    </conflict>
</comment>
<accession>Q4UTQ4</accession>
<name>RLME_XANC8</name>